<reference key="1">
    <citation type="submission" date="2007-02" db="EMBL/GenBank/DDBJ databases">
        <title>Complete sequence of chromosome of Yersinia pestis Pestoides F.</title>
        <authorList>
            <consortium name="US DOE Joint Genome Institute"/>
            <person name="Copeland A."/>
            <person name="Lucas S."/>
            <person name="Lapidus A."/>
            <person name="Barry K."/>
            <person name="Detter J.C."/>
            <person name="Glavina del Rio T."/>
            <person name="Hammon N."/>
            <person name="Israni S."/>
            <person name="Dalin E."/>
            <person name="Tice H."/>
            <person name="Pitluck S."/>
            <person name="Di Bartolo G."/>
            <person name="Chain P."/>
            <person name="Malfatti S."/>
            <person name="Shin M."/>
            <person name="Vergez L."/>
            <person name="Schmutz J."/>
            <person name="Larimer F."/>
            <person name="Land M."/>
            <person name="Hauser L."/>
            <person name="Worsham P."/>
            <person name="Chu M."/>
            <person name="Bearden S."/>
            <person name="Garcia E."/>
            <person name="Richardson P."/>
        </authorList>
    </citation>
    <scope>NUCLEOTIDE SEQUENCE [LARGE SCALE GENOMIC DNA]</scope>
    <source>
        <strain>Pestoides F</strain>
    </source>
</reference>
<feature type="chain" id="PRO_1000004834" description="Protein-L-isoaspartate O-methyltransferase">
    <location>
        <begin position="1"/>
        <end position="208"/>
    </location>
</feature>
<feature type="active site" evidence="1">
    <location>
        <position position="59"/>
    </location>
</feature>
<protein>
    <recommendedName>
        <fullName evidence="1">Protein-L-isoaspartate O-methyltransferase</fullName>
        <ecNumber evidence="1">2.1.1.77</ecNumber>
    </recommendedName>
    <alternativeName>
        <fullName evidence="1">L-isoaspartyl protein carboxyl methyltransferase</fullName>
    </alternativeName>
    <alternativeName>
        <fullName evidence="1">Protein L-isoaspartyl methyltransferase</fullName>
    </alternativeName>
    <alternativeName>
        <fullName evidence="1">Protein-beta-aspartate methyltransferase</fullName>
        <shortName evidence="1">PIMT</shortName>
    </alternativeName>
</protein>
<evidence type="ECO:0000255" key="1">
    <source>
        <dbReference type="HAMAP-Rule" id="MF_00090"/>
    </source>
</evidence>
<gene>
    <name evidence="1" type="primary">pcm</name>
    <name type="ordered locus">YPDSF_3003</name>
</gene>
<sequence length="208" mass="23432">MVNKRMQTLLMQLRQQGIHDERLLQAIEAVPRERFVDEALAHKAYENTALPIGAGQTISQPYMVARMTELLQLTPTSRVLEIGTGSGYQTAILAHLVDHVCSVERIKGLQWQAKRRLKQLDLHNVSTRHGDGWLGWQSRGPFDAIIVTAAPPEIPDALLEQLDEGGILVLPVGEQFQTLKYVQRRNNEYHIETVEAVRFVPLVKGELA</sequence>
<accession>A4TQ01</accession>
<dbReference type="EC" id="2.1.1.77" evidence="1"/>
<dbReference type="EMBL" id="CP000668">
    <property type="protein sequence ID" value="ABP41363.1"/>
    <property type="molecule type" value="Genomic_DNA"/>
</dbReference>
<dbReference type="RefSeq" id="WP_002209395.1">
    <property type="nucleotide sequence ID" value="NZ_CP009715.1"/>
</dbReference>
<dbReference type="SMR" id="A4TQ01"/>
<dbReference type="KEGG" id="ypp:YPDSF_3003"/>
<dbReference type="PATRIC" id="fig|386656.14.peg.1360"/>
<dbReference type="GO" id="GO:0005737">
    <property type="term" value="C:cytoplasm"/>
    <property type="evidence" value="ECO:0007669"/>
    <property type="project" value="UniProtKB-SubCell"/>
</dbReference>
<dbReference type="GO" id="GO:0004719">
    <property type="term" value="F:protein-L-isoaspartate (D-aspartate) O-methyltransferase activity"/>
    <property type="evidence" value="ECO:0007669"/>
    <property type="project" value="UniProtKB-UniRule"/>
</dbReference>
<dbReference type="GO" id="GO:0032259">
    <property type="term" value="P:methylation"/>
    <property type="evidence" value="ECO:0007669"/>
    <property type="project" value="UniProtKB-KW"/>
</dbReference>
<dbReference type="GO" id="GO:0036211">
    <property type="term" value="P:protein modification process"/>
    <property type="evidence" value="ECO:0007669"/>
    <property type="project" value="UniProtKB-UniRule"/>
</dbReference>
<dbReference type="GO" id="GO:0030091">
    <property type="term" value="P:protein repair"/>
    <property type="evidence" value="ECO:0007669"/>
    <property type="project" value="UniProtKB-UniRule"/>
</dbReference>
<dbReference type="CDD" id="cd02440">
    <property type="entry name" value="AdoMet_MTases"/>
    <property type="match status" value="1"/>
</dbReference>
<dbReference type="FunFam" id="3.40.50.150:FF:000010">
    <property type="entry name" value="Protein-L-isoaspartate O-methyltransferase"/>
    <property type="match status" value="1"/>
</dbReference>
<dbReference type="Gene3D" id="3.40.50.150">
    <property type="entry name" value="Vaccinia Virus protein VP39"/>
    <property type="match status" value="1"/>
</dbReference>
<dbReference type="HAMAP" id="MF_00090">
    <property type="entry name" value="PIMT"/>
    <property type="match status" value="1"/>
</dbReference>
<dbReference type="InterPro" id="IPR000682">
    <property type="entry name" value="PCMT"/>
</dbReference>
<dbReference type="InterPro" id="IPR029063">
    <property type="entry name" value="SAM-dependent_MTases_sf"/>
</dbReference>
<dbReference type="NCBIfam" id="TIGR00080">
    <property type="entry name" value="pimt"/>
    <property type="match status" value="1"/>
</dbReference>
<dbReference type="NCBIfam" id="NF001453">
    <property type="entry name" value="PRK00312.1"/>
    <property type="match status" value="1"/>
</dbReference>
<dbReference type="PANTHER" id="PTHR11579">
    <property type="entry name" value="PROTEIN-L-ISOASPARTATE O-METHYLTRANSFERASE"/>
    <property type="match status" value="1"/>
</dbReference>
<dbReference type="PANTHER" id="PTHR11579:SF0">
    <property type="entry name" value="PROTEIN-L-ISOASPARTATE(D-ASPARTATE) O-METHYLTRANSFERASE"/>
    <property type="match status" value="1"/>
</dbReference>
<dbReference type="Pfam" id="PF01135">
    <property type="entry name" value="PCMT"/>
    <property type="match status" value="1"/>
</dbReference>
<dbReference type="SUPFAM" id="SSF53335">
    <property type="entry name" value="S-adenosyl-L-methionine-dependent methyltransferases"/>
    <property type="match status" value="1"/>
</dbReference>
<dbReference type="PROSITE" id="PS01279">
    <property type="entry name" value="PCMT"/>
    <property type="match status" value="1"/>
</dbReference>
<organism>
    <name type="scientific">Yersinia pestis (strain Pestoides F)</name>
    <dbReference type="NCBI Taxonomy" id="386656"/>
    <lineage>
        <taxon>Bacteria</taxon>
        <taxon>Pseudomonadati</taxon>
        <taxon>Pseudomonadota</taxon>
        <taxon>Gammaproteobacteria</taxon>
        <taxon>Enterobacterales</taxon>
        <taxon>Yersiniaceae</taxon>
        <taxon>Yersinia</taxon>
    </lineage>
</organism>
<comment type="function">
    <text evidence="1">Catalyzes the methyl esterification of L-isoaspartyl residues in peptides and proteins that result from spontaneous decomposition of normal L-aspartyl and L-asparaginyl residues. It plays a role in the repair and/or degradation of damaged proteins.</text>
</comment>
<comment type="catalytic activity">
    <reaction evidence="1">
        <text>[protein]-L-isoaspartate + S-adenosyl-L-methionine = [protein]-L-isoaspartate alpha-methyl ester + S-adenosyl-L-homocysteine</text>
        <dbReference type="Rhea" id="RHEA:12705"/>
        <dbReference type="Rhea" id="RHEA-COMP:12143"/>
        <dbReference type="Rhea" id="RHEA-COMP:12144"/>
        <dbReference type="ChEBI" id="CHEBI:57856"/>
        <dbReference type="ChEBI" id="CHEBI:59789"/>
        <dbReference type="ChEBI" id="CHEBI:90596"/>
        <dbReference type="ChEBI" id="CHEBI:90598"/>
        <dbReference type="EC" id="2.1.1.77"/>
    </reaction>
</comment>
<comment type="subcellular location">
    <subcellularLocation>
        <location evidence="1">Cytoplasm</location>
    </subcellularLocation>
</comment>
<comment type="similarity">
    <text evidence="1">Belongs to the methyltransferase superfamily. L-isoaspartyl/D-aspartyl protein methyltransferase family.</text>
</comment>
<keyword id="KW-0963">Cytoplasm</keyword>
<keyword id="KW-0489">Methyltransferase</keyword>
<keyword id="KW-0949">S-adenosyl-L-methionine</keyword>
<keyword id="KW-0808">Transferase</keyword>
<proteinExistence type="inferred from homology"/>
<name>PIMT_YERPP</name>